<name>Y459_ANAVA</name>
<reference key="1">
    <citation type="submission" date="1991-04" db="EMBL/GenBank/DDBJ databases">
        <authorList>
            <person name="Sato N."/>
        </authorList>
    </citation>
    <scope>NUCLEOTIDE SEQUENCE [GENOMIC DNA]</scope>
    <source>
        <strain>M3</strain>
    </source>
</reference>
<sequence>MKIFSVALSMLRPVRFLIVAFTCALLFLSSTVPAFAISSYQSEPTEATDQLLETQKATDEVARSAPLGLKEVQKKSNEGLNEVQGVADINKQKRPANSQDSSSVEGDIQNFLEKVTGKN</sequence>
<accession>P29711</accession>
<evidence type="ECO:0000256" key="1">
    <source>
        <dbReference type="SAM" id="MobiDB-lite"/>
    </source>
</evidence>
<dbReference type="EMBL" id="D01016">
    <property type="protein sequence ID" value="BAA00821.1"/>
    <property type="molecule type" value="Genomic_DNA"/>
</dbReference>
<dbReference type="PIR" id="JU0383">
    <property type="entry name" value="JU0383"/>
</dbReference>
<feature type="chain" id="PRO_0000208889" description="Uncharacterized low temperature-induced protein all0459 homolog">
    <location>
        <begin position="1"/>
        <end position="119"/>
    </location>
</feature>
<feature type="region of interest" description="Disordered" evidence="1">
    <location>
        <begin position="67"/>
        <end position="119"/>
    </location>
</feature>
<feature type="compositionally biased region" description="Polar residues" evidence="1">
    <location>
        <begin position="95"/>
        <end position="104"/>
    </location>
</feature>
<organism>
    <name type="scientific">Anabaena variabilis</name>
    <dbReference type="NCBI Taxonomy" id="264691"/>
    <lineage>
        <taxon>Bacteria</taxon>
        <taxon>Bacillati</taxon>
        <taxon>Cyanobacteriota</taxon>
        <taxon>Cyanophyceae</taxon>
        <taxon>Nostocales</taxon>
        <taxon>Nostocaceae</taxon>
        <taxon>Trichormus</taxon>
    </lineage>
</organism>
<protein>
    <recommendedName>
        <fullName>Uncharacterized low temperature-induced protein all0459 homolog</fullName>
    </recommendedName>
</protein>
<proteinExistence type="predicted"/>